<gene>
    <name evidence="1" type="primary">rpmG</name>
    <name type="ordered locus">BHWA1_02317</name>
</gene>
<keyword id="KW-0687">Ribonucleoprotein</keyword>
<keyword id="KW-0689">Ribosomal protein</keyword>
<comment type="similarity">
    <text evidence="1">Belongs to the bacterial ribosomal protein bL33 family.</text>
</comment>
<organism>
    <name type="scientific">Brachyspira hyodysenteriae (strain ATCC 49526 / WA1)</name>
    <dbReference type="NCBI Taxonomy" id="565034"/>
    <lineage>
        <taxon>Bacteria</taxon>
        <taxon>Pseudomonadati</taxon>
        <taxon>Spirochaetota</taxon>
        <taxon>Spirochaetia</taxon>
        <taxon>Brachyspirales</taxon>
        <taxon>Brachyspiraceae</taxon>
        <taxon>Brachyspira</taxon>
    </lineage>
</organism>
<name>RL33_BRAHW</name>
<reference key="1">
    <citation type="journal article" date="2009" name="PLoS ONE">
        <title>Genome sequence of the pathogenic intestinal spirochete Brachyspira hyodysenteriae reveals adaptations to its lifestyle in the porcine large intestine.</title>
        <authorList>
            <person name="Bellgard M.I."/>
            <person name="Wanchanthuek P."/>
            <person name="La T."/>
            <person name="Ryan K."/>
            <person name="Moolhuijzen P."/>
            <person name="Albertyn Z."/>
            <person name="Shaban B."/>
            <person name="Motro Y."/>
            <person name="Dunn D.S."/>
            <person name="Schibeci D."/>
            <person name="Hunter A."/>
            <person name="Barrero R."/>
            <person name="Phillips N.D."/>
            <person name="Hampson D.J."/>
        </authorList>
    </citation>
    <scope>NUCLEOTIDE SEQUENCE [LARGE SCALE GENOMIC DNA]</scope>
    <source>
        <strain>ATCC 49526 / WA1</strain>
    </source>
</reference>
<accession>C0QWW9</accession>
<feature type="chain" id="PRO_1000204902" description="Large ribosomal subunit protein bL33">
    <location>
        <begin position="1"/>
        <end position="58"/>
    </location>
</feature>
<evidence type="ECO:0000255" key="1">
    <source>
        <dbReference type="HAMAP-Rule" id="MF_00294"/>
    </source>
</evidence>
<evidence type="ECO:0000305" key="2"/>
<protein>
    <recommendedName>
        <fullName evidence="1">Large ribosomal subunit protein bL33</fullName>
    </recommendedName>
    <alternativeName>
        <fullName evidence="2">50S ribosomal protein L33</fullName>
    </alternativeName>
</protein>
<dbReference type="EMBL" id="CP001357">
    <property type="protein sequence ID" value="ACN84772.1"/>
    <property type="molecule type" value="Genomic_DNA"/>
</dbReference>
<dbReference type="RefSeq" id="WP_008723772.1">
    <property type="nucleotide sequence ID" value="NC_012225.1"/>
</dbReference>
<dbReference type="SMR" id="C0QWW9"/>
<dbReference type="STRING" id="565034.BHWA1_02317"/>
<dbReference type="GeneID" id="66487812"/>
<dbReference type="KEGG" id="bhy:BHWA1_02317"/>
<dbReference type="eggNOG" id="COG0267">
    <property type="taxonomic scope" value="Bacteria"/>
</dbReference>
<dbReference type="HOGENOM" id="CLU_190949_0_2_12"/>
<dbReference type="Proteomes" id="UP000001803">
    <property type="component" value="Chromosome"/>
</dbReference>
<dbReference type="GO" id="GO:0005737">
    <property type="term" value="C:cytoplasm"/>
    <property type="evidence" value="ECO:0007669"/>
    <property type="project" value="UniProtKB-ARBA"/>
</dbReference>
<dbReference type="GO" id="GO:1990904">
    <property type="term" value="C:ribonucleoprotein complex"/>
    <property type="evidence" value="ECO:0007669"/>
    <property type="project" value="UniProtKB-KW"/>
</dbReference>
<dbReference type="GO" id="GO:0005840">
    <property type="term" value="C:ribosome"/>
    <property type="evidence" value="ECO:0007669"/>
    <property type="project" value="UniProtKB-KW"/>
</dbReference>
<dbReference type="GO" id="GO:0003735">
    <property type="term" value="F:structural constituent of ribosome"/>
    <property type="evidence" value="ECO:0007669"/>
    <property type="project" value="InterPro"/>
</dbReference>
<dbReference type="GO" id="GO:0006412">
    <property type="term" value="P:translation"/>
    <property type="evidence" value="ECO:0007669"/>
    <property type="project" value="UniProtKB-UniRule"/>
</dbReference>
<dbReference type="Gene3D" id="2.20.28.120">
    <property type="entry name" value="Ribosomal protein L33"/>
    <property type="match status" value="1"/>
</dbReference>
<dbReference type="HAMAP" id="MF_00294">
    <property type="entry name" value="Ribosomal_bL33"/>
    <property type="match status" value="1"/>
</dbReference>
<dbReference type="InterPro" id="IPR001705">
    <property type="entry name" value="Ribosomal_bL33"/>
</dbReference>
<dbReference type="InterPro" id="IPR018264">
    <property type="entry name" value="Ribosomal_bL33_CS"/>
</dbReference>
<dbReference type="InterPro" id="IPR038584">
    <property type="entry name" value="Ribosomal_bL33_sf"/>
</dbReference>
<dbReference type="InterPro" id="IPR011332">
    <property type="entry name" value="Ribosomal_zn-bd"/>
</dbReference>
<dbReference type="NCBIfam" id="NF001764">
    <property type="entry name" value="PRK00504.1"/>
    <property type="match status" value="1"/>
</dbReference>
<dbReference type="NCBIfam" id="NF001860">
    <property type="entry name" value="PRK00595.1"/>
    <property type="match status" value="1"/>
</dbReference>
<dbReference type="NCBIfam" id="TIGR01023">
    <property type="entry name" value="rpmG_bact"/>
    <property type="match status" value="1"/>
</dbReference>
<dbReference type="PANTHER" id="PTHR43168">
    <property type="entry name" value="50S RIBOSOMAL PROTEIN L33, CHLOROPLASTIC"/>
    <property type="match status" value="1"/>
</dbReference>
<dbReference type="PANTHER" id="PTHR43168:SF2">
    <property type="entry name" value="LARGE RIBOSOMAL SUBUNIT PROTEIN BL33C"/>
    <property type="match status" value="1"/>
</dbReference>
<dbReference type="Pfam" id="PF00471">
    <property type="entry name" value="Ribosomal_L33"/>
    <property type="match status" value="1"/>
</dbReference>
<dbReference type="SUPFAM" id="SSF57829">
    <property type="entry name" value="Zn-binding ribosomal proteins"/>
    <property type="match status" value="1"/>
</dbReference>
<dbReference type="PROSITE" id="PS00582">
    <property type="entry name" value="RIBOSOMAL_L33"/>
    <property type="match status" value="1"/>
</dbReference>
<sequence length="58" mass="6875">MAGAKVKTEQIHLQCTECKRKNYITTKNKQNVPEKLELKKYCPHDKKHTIHKELKVSR</sequence>
<proteinExistence type="inferred from homology"/>